<organism>
    <name type="scientific">Saccharomyces cerevisiae (strain ATCC 204508 / S288c)</name>
    <name type="common">Baker's yeast</name>
    <dbReference type="NCBI Taxonomy" id="559292"/>
    <lineage>
        <taxon>Eukaryota</taxon>
        <taxon>Fungi</taxon>
        <taxon>Dikarya</taxon>
        <taxon>Ascomycota</taxon>
        <taxon>Saccharomycotina</taxon>
        <taxon>Saccharomycetes</taxon>
        <taxon>Saccharomycetales</taxon>
        <taxon>Saccharomycetaceae</taxon>
        <taxon>Saccharomyces</taxon>
    </lineage>
</organism>
<protein>
    <recommendedName>
        <fullName evidence="9">Very-long-chain enoyl-CoA reductase</fullName>
        <ecNumber evidence="2">1.3.1.93</ecNumber>
    </recommendedName>
    <alternativeName>
        <fullName>Enoyl reductase TSC13</fullName>
    </alternativeName>
    <alternativeName>
        <fullName>Temperature-sensitive CSG2 suppressor protein 13</fullName>
    </alternativeName>
    <alternativeName>
        <fullName>Trans-2-enoyl-CoA reductase</fullName>
    </alternativeName>
</protein>
<evidence type="ECO:0000255" key="1"/>
<evidence type="ECO:0000269" key="2">
    <source>
    </source>
</evidence>
<evidence type="ECO:0000269" key="3">
    <source>
    </source>
</evidence>
<evidence type="ECO:0000269" key="4">
    <source>
    </source>
</evidence>
<evidence type="ECO:0000269" key="5">
    <source>
    </source>
</evidence>
<evidence type="ECO:0000269" key="6">
    <source>
    </source>
</evidence>
<evidence type="ECO:0000269" key="7">
    <source>
    </source>
</evidence>
<evidence type="ECO:0000269" key="8">
    <source>
    </source>
</evidence>
<evidence type="ECO:0000305" key="9"/>
<evidence type="ECO:0000305" key="10">
    <source>
    </source>
</evidence>
<evidence type="ECO:0000305" key="11">
    <source>
    </source>
</evidence>
<evidence type="ECO:0000305" key="12">
    <source>
    </source>
</evidence>
<evidence type="ECO:0000305" key="13">
    <source>
    </source>
</evidence>
<feature type="chain" id="PRO_0000262739" description="Very-long-chain enoyl-CoA reductase">
    <location>
        <begin position="1"/>
        <end position="310"/>
    </location>
</feature>
<feature type="topological domain" description="Cytoplasmic" evidence="12">
    <location>
        <begin position="1"/>
        <end position="85"/>
    </location>
</feature>
<feature type="transmembrane region" description="Helical" evidence="1">
    <location>
        <begin position="86"/>
        <end position="106"/>
    </location>
</feature>
<feature type="topological domain" description="Lumenal" evidence="12">
    <location>
        <begin position="107"/>
        <end position="141"/>
    </location>
</feature>
<feature type="transmembrane region" description="Helical" evidence="1">
    <location>
        <begin position="142"/>
        <end position="162"/>
    </location>
</feature>
<feature type="topological domain" description="Cytoplasmic" evidence="12">
    <location>
        <begin position="163"/>
        <end position="165"/>
    </location>
</feature>
<feature type="transmembrane region" description="Helical" evidence="1">
    <location>
        <begin position="166"/>
        <end position="186"/>
    </location>
</feature>
<feature type="topological domain" description="Lumenal" evidence="12">
    <location>
        <begin position="187"/>
        <end position="201"/>
    </location>
</feature>
<feature type="transmembrane region" description="Helical" evidence="1">
    <location>
        <begin position="202"/>
        <end position="222"/>
    </location>
</feature>
<feature type="topological domain" description="Cytoplasmic" evidence="12">
    <location>
        <begin position="223"/>
        <end position="242"/>
    </location>
</feature>
<feature type="transmembrane region" description="Helical" evidence="1">
    <location>
        <begin position="243"/>
        <end position="265"/>
    </location>
</feature>
<feature type="topological domain" description="Lumenal" evidence="12">
    <location>
        <begin position="266"/>
        <end position="268"/>
    </location>
</feature>
<feature type="transmembrane region" description="Helical" evidence="1">
    <location>
        <begin position="269"/>
        <end position="291"/>
    </location>
</feature>
<feature type="topological domain" description="Cytoplasmic" evidence="7">
    <location>
        <begin position="292"/>
        <end position="310"/>
    </location>
</feature>
<feature type="mutagenesis site" description="In TSC13-1; reduces fatty acid elongation activity by 50%." evidence="2">
    <original>Q</original>
    <variation>K</variation>
    <location>
        <position position="81"/>
    </location>
</feature>
<comment type="function">
    <text evidence="2 6">Catalyzes the last of the four reactions of the long-chain fatty acids elongation cycle. This endoplasmic reticulum-bound enzymatic process, allows the addition of 2 carbons to the chain of long- and very long-chain fatty acids/VLCFAs per cycle. This enzyme reduces the trans-2,3-enoyl-CoA fatty acid intermediate to an acyl-CoA that can be further elongated by entering a new cycle of elongation. Thereby, it participates in the production of VLCFAs of different chain lengths that are involved in multiple biological processes as precursors of membrane lipids and lipid mediators. VLCFAs serve for instance as precursors for ceramide and sphingolipids. Required for normal biogenesis of piecemeal microautophagy of the nucleus (PMN) bleps and vesicles during nutrient stress.</text>
</comment>
<comment type="catalytic activity">
    <reaction evidence="2">
        <text>a very-long-chain 2,3-saturated fatty acyl-CoA + NADP(+) = a very-long-chain (2E)-enoyl-CoA + NADPH + H(+)</text>
        <dbReference type="Rhea" id="RHEA:14473"/>
        <dbReference type="ChEBI" id="CHEBI:15378"/>
        <dbReference type="ChEBI" id="CHEBI:57783"/>
        <dbReference type="ChEBI" id="CHEBI:58349"/>
        <dbReference type="ChEBI" id="CHEBI:83724"/>
        <dbReference type="ChEBI" id="CHEBI:83728"/>
        <dbReference type="EC" id="1.3.1.93"/>
    </reaction>
    <physiologicalReaction direction="right-to-left" evidence="10">
        <dbReference type="Rhea" id="RHEA:14475"/>
    </physiologicalReaction>
</comment>
<comment type="catalytic activity">
    <reaction evidence="3 8">
        <text>octadecanoyl-CoA + NADP(+) = (2E)-octadecenoyl-CoA + NADPH + H(+)</text>
        <dbReference type="Rhea" id="RHEA:35351"/>
        <dbReference type="ChEBI" id="CHEBI:15378"/>
        <dbReference type="ChEBI" id="CHEBI:57394"/>
        <dbReference type="ChEBI" id="CHEBI:57783"/>
        <dbReference type="ChEBI" id="CHEBI:58349"/>
        <dbReference type="ChEBI" id="CHEBI:71412"/>
    </reaction>
    <physiologicalReaction direction="right-to-left" evidence="11 13">
        <dbReference type="Rhea" id="RHEA:35353"/>
    </physiologicalReaction>
</comment>
<comment type="catalytic activity">
    <reaction evidence="8">
        <text>(2E)-eicosenoyl-CoA + NADPH + H(+) = eicosanoyl-CoA + NADP(+)</text>
        <dbReference type="Rhea" id="RHEA:39179"/>
        <dbReference type="ChEBI" id="CHEBI:15378"/>
        <dbReference type="ChEBI" id="CHEBI:57380"/>
        <dbReference type="ChEBI" id="CHEBI:57783"/>
        <dbReference type="ChEBI" id="CHEBI:58349"/>
        <dbReference type="ChEBI" id="CHEBI:74691"/>
    </reaction>
    <physiologicalReaction direction="left-to-right" evidence="13">
        <dbReference type="Rhea" id="RHEA:39180"/>
    </physiologicalReaction>
</comment>
<comment type="catalytic activity">
    <reaction evidence="8">
        <text>(2E)-docosenoyl-CoA + NADPH + H(+) = docosanoyl-CoA + NADP(+)</text>
        <dbReference type="Rhea" id="RHEA:39191"/>
        <dbReference type="ChEBI" id="CHEBI:15378"/>
        <dbReference type="ChEBI" id="CHEBI:57783"/>
        <dbReference type="ChEBI" id="CHEBI:58349"/>
        <dbReference type="ChEBI" id="CHEBI:65059"/>
        <dbReference type="ChEBI" id="CHEBI:74692"/>
    </reaction>
    <physiologicalReaction direction="left-to-right" evidence="13">
        <dbReference type="Rhea" id="RHEA:39192"/>
    </physiologicalReaction>
</comment>
<comment type="catalytic activity">
    <reaction evidence="8">
        <text>(2E)-tetracosenoyl-CoA + NADPH + H(+) = tetracosanoyl-CoA + NADP(+)</text>
        <dbReference type="Rhea" id="RHEA:39203"/>
        <dbReference type="ChEBI" id="CHEBI:15378"/>
        <dbReference type="ChEBI" id="CHEBI:57783"/>
        <dbReference type="ChEBI" id="CHEBI:58349"/>
        <dbReference type="ChEBI" id="CHEBI:65052"/>
        <dbReference type="ChEBI" id="CHEBI:74693"/>
    </reaction>
    <physiologicalReaction direction="left-to-right" evidence="13">
        <dbReference type="Rhea" id="RHEA:39204"/>
    </physiologicalReaction>
</comment>
<comment type="catalytic activity">
    <reaction evidence="8">
        <text>(2E)-hexacosenoyl-CoA + NADPH + H(+) = hexacosanoyl-CoA + NADP(+)</text>
        <dbReference type="Rhea" id="RHEA:39215"/>
        <dbReference type="ChEBI" id="CHEBI:15378"/>
        <dbReference type="ChEBI" id="CHEBI:57783"/>
        <dbReference type="ChEBI" id="CHEBI:58349"/>
        <dbReference type="ChEBI" id="CHEBI:64868"/>
        <dbReference type="ChEBI" id="CHEBI:74281"/>
    </reaction>
    <physiologicalReaction direction="left-to-right" evidence="13">
        <dbReference type="Rhea" id="RHEA:39216"/>
    </physiologicalReaction>
</comment>
<comment type="pathway">
    <text evidence="2">Lipid metabolism; fatty acid biosynthesis.</text>
</comment>
<comment type="subunit">
    <text evidence="2 6">Interacts with the fatty acid elongation system components ELO2 and ELO3. Interacts with NVJ1.</text>
</comment>
<comment type="subcellular location">
    <subcellularLocation>
        <location evidence="2 4 6">Endoplasmic reticulum membrane</location>
        <topology evidence="2 4 6">Multi-pass membrane protein</topology>
    </subcellularLocation>
    <text evidence="2 6">Accumulates at nucleus-vacuole (NV) junctions. Sequestred to NV junctions by NVJ1. Accumulates in nuclear PMN bleps and vesicles during stationary phase and nitrogen starvation.</text>
</comment>
<comment type="miscellaneous">
    <text evidence="5">Present with 23600 molecules/cell in log phase SD medium.</text>
</comment>
<comment type="similarity">
    <text evidence="9">Belongs to the steroid 5-alpha reductase family.</text>
</comment>
<reference key="1">
    <citation type="journal article" date="1997" name="Nature">
        <title>The nucleotide sequence of Saccharomyces cerevisiae chromosome IV.</title>
        <authorList>
            <person name="Jacq C."/>
            <person name="Alt-Moerbe J."/>
            <person name="Andre B."/>
            <person name="Arnold W."/>
            <person name="Bahr A."/>
            <person name="Ballesta J.P.G."/>
            <person name="Bargues M."/>
            <person name="Baron L."/>
            <person name="Becker A."/>
            <person name="Biteau N."/>
            <person name="Bloecker H."/>
            <person name="Blugeon C."/>
            <person name="Boskovic J."/>
            <person name="Brandt P."/>
            <person name="Brueckner M."/>
            <person name="Buitrago M.J."/>
            <person name="Coster F."/>
            <person name="Delaveau T."/>
            <person name="del Rey F."/>
            <person name="Dujon B."/>
            <person name="Eide L.G."/>
            <person name="Garcia-Cantalejo J.M."/>
            <person name="Goffeau A."/>
            <person name="Gomez-Peris A."/>
            <person name="Granotier C."/>
            <person name="Hanemann V."/>
            <person name="Hankeln T."/>
            <person name="Hoheisel J.D."/>
            <person name="Jaeger W."/>
            <person name="Jimenez A."/>
            <person name="Jonniaux J.-L."/>
            <person name="Kraemer C."/>
            <person name="Kuester H."/>
            <person name="Laamanen P."/>
            <person name="Legros Y."/>
            <person name="Louis E.J."/>
            <person name="Moeller-Rieker S."/>
            <person name="Monnet A."/>
            <person name="Moro M."/>
            <person name="Mueller-Auer S."/>
            <person name="Nussbaumer B."/>
            <person name="Paricio N."/>
            <person name="Paulin L."/>
            <person name="Perea J."/>
            <person name="Perez-Alonso M."/>
            <person name="Perez-Ortin J.E."/>
            <person name="Pohl T.M."/>
            <person name="Prydz H."/>
            <person name="Purnelle B."/>
            <person name="Rasmussen S.W."/>
            <person name="Remacha M.A."/>
            <person name="Revuelta J.L."/>
            <person name="Rieger M."/>
            <person name="Salom D."/>
            <person name="Saluz H.P."/>
            <person name="Saiz J.E."/>
            <person name="Saren A.-M."/>
            <person name="Schaefer M."/>
            <person name="Scharfe M."/>
            <person name="Schmidt E.R."/>
            <person name="Schneider C."/>
            <person name="Scholler P."/>
            <person name="Schwarz S."/>
            <person name="Soler-Mira A."/>
            <person name="Urrestarazu L.A."/>
            <person name="Verhasselt P."/>
            <person name="Vissers S."/>
            <person name="Voet M."/>
            <person name="Volckaert G."/>
            <person name="Wagner G."/>
            <person name="Wambutt R."/>
            <person name="Wedler E."/>
            <person name="Wedler H."/>
            <person name="Woelfl S."/>
            <person name="Harris D.E."/>
            <person name="Bowman S."/>
            <person name="Brown D."/>
            <person name="Churcher C.M."/>
            <person name="Connor R."/>
            <person name="Dedman K."/>
            <person name="Gentles S."/>
            <person name="Hamlin N."/>
            <person name="Hunt S."/>
            <person name="Jones L."/>
            <person name="McDonald S."/>
            <person name="Murphy L.D."/>
            <person name="Niblett D."/>
            <person name="Odell C."/>
            <person name="Oliver K."/>
            <person name="Rajandream M.A."/>
            <person name="Richards C."/>
            <person name="Shore L."/>
            <person name="Walsh S.V."/>
            <person name="Barrell B.G."/>
            <person name="Dietrich F.S."/>
            <person name="Mulligan J.T."/>
            <person name="Allen E."/>
            <person name="Araujo R."/>
            <person name="Aviles E."/>
            <person name="Berno A."/>
            <person name="Carpenter J."/>
            <person name="Chen E."/>
            <person name="Cherry J.M."/>
            <person name="Chung E."/>
            <person name="Duncan M."/>
            <person name="Hunicke-Smith S."/>
            <person name="Hyman R.W."/>
            <person name="Komp C."/>
            <person name="Lashkari D."/>
            <person name="Lew H."/>
            <person name="Lin D."/>
            <person name="Mosedale D."/>
            <person name="Nakahara K."/>
            <person name="Namath A."/>
            <person name="Oefner P."/>
            <person name="Oh C."/>
            <person name="Petel F.X."/>
            <person name="Roberts D."/>
            <person name="Schramm S."/>
            <person name="Schroeder M."/>
            <person name="Shogren T."/>
            <person name="Shroff N."/>
            <person name="Winant A."/>
            <person name="Yelton M.A."/>
            <person name="Botstein D."/>
            <person name="Davis R.W."/>
            <person name="Johnston M."/>
            <person name="Andrews S."/>
            <person name="Brinkman R."/>
            <person name="Cooper J."/>
            <person name="Ding H."/>
            <person name="Du Z."/>
            <person name="Favello A."/>
            <person name="Fulton L."/>
            <person name="Gattung S."/>
            <person name="Greco T."/>
            <person name="Hallsworth K."/>
            <person name="Hawkins J."/>
            <person name="Hillier L.W."/>
            <person name="Jier M."/>
            <person name="Johnson D."/>
            <person name="Johnston L."/>
            <person name="Kirsten J."/>
            <person name="Kucaba T."/>
            <person name="Langston Y."/>
            <person name="Latreille P."/>
            <person name="Le T."/>
            <person name="Mardis E."/>
            <person name="Menezes S."/>
            <person name="Miller N."/>
            <person name="Nhan M."/>
            <person name="Pauley A."/>
            <person name="Peluso D."/>
            <person name="Rifkin L."/>
            <person name="Riles L."/>
            <person name="Taich A."/>
            <person name="Trevaskis E."/>
            <person name="Vignati D."/>
            <person name="Wilcox L."/>
            <person name="Wohldman P."/>
            <person name="Vaudin M."/>
            <person name="Wilson R."/>
            <person name="Waterston R."/>
            <person name="Albermann K."/>
            <person name="Hani J."/>
            <person name="Heumann K."/>
            <person name="Kleine K."/>
            <person name="Mewes H.-W."/>
            <person name="Zollner A."/>
            <person name="Zaccaria P."/>
        </authorList>
    </citation>
    <scope>NUCLEOTIDE SEQUENCE [LARGE SCALE GENOMIC DNA]</scope>
    <source>
        <strain>ATCC 204508 / S288c</strain>
    </source>
</reference>
<reference key="2">
    <citation type="journal article" date="2014" name="G3 (Bethesda)">
        <title>The reference genome sequence of Saccharomyces cerevisiae: Then and now.</title>
        <authorList>
            <person name="Engel S.R."/>
            <person name="Dietrich F.S."/>
            <person name="Fisk D.G."/>
            <person name="Binkley G."/>
            <person name="Balakrishnan R."/>
            <person name="Costanzo M.C."/>
            <person name="Dwight S.S."/>
            <person name="Hitz B.C."/>
            <person name="Karra K."/>
            <person name="Nash R.S."/>
            <person name="Weng S."/>
            <person name="Wong E.D."/>
            <person name="Lloyd P."/>
            <person name="Skrzypek M.S."/>
            <person name="Miyasato S.R."/>
            <person name="Simison M."/>
            <person name="Cherry J.M."/>
        </authorList>
    </citation>
    <scope>GENOME REANNOTATION</scope>
    <source>
        <strain>ATCC 204508 / S288c</strain>
    </source>
</reference>
<reference key="3">
    <citation type="journal article" date="2001" name="Mol. Cell. Biol.">
        <title>Tsc13p is required for fatty acid elongation and localizes to a novel structure at the nuclear-vacuolar interface in Saccharomyces cerevisiae.</title>
        <authorList>
            <person name="Kohlwein S.D."/>
            <person name="Eder S."/>
            <person name="Oh C.-S."/>
            <person name="Martin C.E."/>
            <person name="Gable K."/>
            <person name="Bacikova D."/>
            <person name="Dunn T.M."/>
        </authorList>
    </citation>
    <scope>FUNCTION</scope>
    <scope>CATALYTIC ACTIVITY</scope>
    <scope>PATHWAY</scope>
    <scope>SUBCELLULAR LOCATION</scope>
    <scope>INTERACTION WITH ELO2 AND ELO3</scope>
    <scope>MUTAGENESIS OF GLN-81</scope>
</reference>
<reference key="4">
    <citation type="journal article" date="2002" name="J. Biol. Chem.">
        <title>The Saccharomyces cerevisiae YBR159w gene encodes the 3-ketoreductase of the microsomal fatty acid elongase.</title>
        <authorList>
            <person name="Han G."/>
            <person name="Gable K."/>
            <person name="Kohlwein S.D."/>
            <person name="Beaudoin F."/>
            <person name="Napier J.A."/>
            <person name="Dunn T.M."/>
        </authorList>
    </citation>
    <scope>CATALYTIC ACTIVITY</scope>
</reference>
<reference key="5">
    <citation type="journal article" date="2003" name="Nature">
        <title>Global analysis of protein localization in budding yeast.</title>
        <authorList>
            <person name="Huh W.-K."/>
            <person name="Falvo J.V."/>
            <person name="Gerke L.C."/>
            <person name="Carroll A.S."/>
            <person name="Howson R.W."/>
            <person name="Weissman J.S."/>
            <person name="O'Shea E.K."/>
        </authorList>
    </citation>
    <scope>SUBCELLULAR LOCATION [LARGE SCALE ANALYSIS]</scope>
</reference>
<reference key="6">
    <citation type="journal article" date="2003" name="Nature">
        <title>Global analysis of protein expression in yeast.</title>
        <authorList>
            <person name="Ghaemmaghami S."/>
            <person name="Huh W.-K."/>
            <person name="Bower K."/>
            <person name="Howson R.W."/>
            <person name="Belle A."/>
            <person name="Dephoure N."/>
            <person name="O'Shea E.K."/>
            <person name="Weissman J.S."/>
        </authorList>
    </citation>
    <scope>LEVEL OF PROTEIN EXPRESSION [LARGE SCALE ANALYSIS]</scope>
</reference>
<reference key="7">
    <citation type="journal article" date="2005" name="Mol. Biol. Cell">
        <title>Targeting of Tsc13p to nucleus-vacuole junctions: a role for very-long-chain fatty acids in the biogenesis of microautophagic vesicles.</title>
        <authorList>
            <person name="Kvam E."/>
            <person name="Gable K."/>
            <person name="Dunn T.M."/>
            <person name="Goldfarb D.S."/>
        </authorList>
    </citation>
    <scope>FUNCTION</scope>
    <scope>SUBCELLULAR LOCATION</scope>
    <scope>INTERACTION WITH NVJ1</scope>
</reference>
<reference key="8">
    <citation type="journal article" date="2006" name="Proc. Natl. Acad. Sci. U.S.A.">
        <title>A global topology map of the Saccharomyces cerevisiae membrane proteome.</title>
        <authorList>
            <person name="Kim H."/>
            <person name="Melen K."/>
            <person name="Oesterberg M."/>
            <person name="von Heijne G."/>
        </authorList>
    </citation>
    <scope>TOPOLOGY [LARGE SCALE ANALYSIS]</scope>
    <source>
        <strain>ATCC 208353 / W303-1A</strain>
    </source>
</reference>
<reference key="9">
    <citation type="journal article" date="2007" name="Cell">
        <title>A molecular caliper mechanism for determining very long-chain fatty acid length.</title>
        <authorList>
            <person name="Denic V."/>
            <person name="Weissman J.S."/>
        </authorList>
    </citation>
    <scope>CATALYTIC ACTIVITY</scope>
</reference>
<reference key="10">
    <citation type="journal article" date="2012" name="Proc. Natl. Acad. Sci. U.S.A.">
        <title>N-terminal acetylome analyses and functional insights of the N-terminal acetyltransferase NatB.</title>
        <authorList>
            <person name="Van Damme P."/>
            <person name="Lasa M."/>
            <person name="Polevoda B."/>
            <person name="Gazquez C."/>
            <person name="Elosegui-Artola A."/>
            <person name="Kim D.S."/>
            <person name="De Juan-Pardo E."/>
            <person name="Demeyer K."/>
            <person name="Hole K."/>
            <person name="Larrea E."/>
            <person name="Timmerman E."/>
            <person name="Prieto J."/>
            <person name="Arnesen T."/>
            <person name="Sherman F."/>
            <person name="Gevaert K."/>
            <person name="Aldabe R."/>
        </authorList>
    </citation>
    <scope>IDENTIFICATION BY MASS SPECTROMETRY [LARGE SCALE ANALYSIS]</scope>
</reference>
<keyword id="KW-0256">Endoplasmic reticulum</keyword>
<keyword id="KW-0275">Fatty acid biosynthesis</keyword>
<keyword id="KW-0276">Fatty acid metabolism</keyword>
<keyword id="KW-0444">Lipid biosynthesis</keyword>
<keyword id="KW-0443">Lipid metabolism</keyword>
<keyword id="KW-0472">Membrane</keyword>
<keyword id="KW-0521">NADP</keyword>
<keyword id="KW-0560">Oxidoreductase</keyword>
<keyword id="KW-1185">Reference proteome</keyword>
<keyword id="KW-0812">Transmembrane</keyword>
<keyword id="KW-1133">Transmembrane helix</keyword>
<gene>
    <name type="primary">TSC13</name>
    <name type="ordered locus">YDL015C</name>
    <name type="ORF">D2865</name>
</gene>
<sequence>MPITIKSRSKGLRDTEIDLSKKPTLDDVLKKISANNHNISKYRIRLTYKKESKQVPVISESFFQEEADDSMEFFIKDLGPQISWRLVFFCEYLGPVLVHSLFYYLSTIPTVVDRWHSASSDYNPFLNRVAYFLILGHYGKRLFETLFVHQFSLATMPIFNLFKNCFHYWVLSGLISFGYFGYGFPFGNAKLFKYYSYLKLDDLSTLIGLFVLSELWNFYCHIKLRLWGDYQKKHGNAKIRVPLNQGIFNLFVAPNYTFEVWSWIWFTFVFKFNLFAVLFLTVSTAQMYAWAQKKNKKYHTRRAFLIPFVF</sequence>
<proteinExistence type="evidence at protein level"/>
<dbReference type="EC" id="1.3.1.93" evidence="2"/>
<dbReference type="EMBL" id="Z48432">
    <property type="protein sequence ID" value="CAA88344.1"/>
    <property type="molecule type" value="Genomic_DNA"/>
</dbReference>
<dbReference type="EMBL" id="Z74063">
    <property type="protein sequence ID" value="CAA98573.1"/>
    <property type="molecule type" value="Genomic_DNA"/>
</dbReference>
<dbReference type="EMBL" id="BK006938">
    <property type="protein sequence ID" value="DAA11834.1"/>
    <property type="molecule type" value="Genomic_DNA"/>
</dbReference>
<dbReference type="PIR" id="S52504">
    <property type="entry name" value="S52504"/>
</dbReference>
<dbReference type="RefSeq" id="NP_010269.1">
    <property type="nucleotide sequence ID" value="NM_001180074.1"/>
</dbReference>
<dbReference type="SMR" id="Q99190"/>
<dbReference type="BioGRID" id="32039">
    <property type="interactions" value="428"/>
</dbReference>
<dbReference type="DIP" id="DIP-5599N"/>
<dbReference type="FunCoup" id="Q99190">
    <property type="interactions" value="509"/>
</dbReference>
<dbReference type="IntAct" id="Q99190">
    <property type="interactions" value="37"/>
</dbReference>
<dbReference type="MINT" id="Q99190"/>
<dbReference type="STRING" id="4932.YDL015C"/>
<dbReference type="SwissLipids" id="SLP:000000503"/>
<dbReference type="iPTMnet" id="Q99190"/>
<dbReference type="PaxDb" id="4932-YDL015C"/>
<dbReference type="PeptideAtlas" id="Q99190"/>
<dbReference type="EnsemblFungi" id="YDL015C_mRNA">
    <property type="protein sequence ID" value="YDL015C"/>
    <property type="gene ID" value="YDL015C"/>
</dbReference>
<dbReference type="GeneID" id="851547"/>
<dbReference type="KEGG" id="sce:YDL015C"/>
<dbReference type="AGR" id="SGD:S000002173"/>
<dbReference type="SGD" id="S000002173">
    <property type="gene designation" value="TSC13"/>
</dbReference>
<dbReference type="VEuPathDB" id="FungiDB:YDL015C"/>
<dbReference type="eggNOG" id="KOG1639">
    <property type="taxonomic scope" value="Eukaryota"/>
</dbReference>
<dbReference type="GeneTree" id="ENSGT00950000182886"/>
<dbReference type="HOGENOM" id="CLU_059260_0_0_1"/>
<dbReference type="InParanoid" id="Q99190"/>
<dbReference type="OMA" id="ATMPIFN"/>
<dbReference type="OrthoDB" id="540503at2759"/>
<dbReference type="BioCyc" id="MetaCyc:G3O-29445-MONOMER"/>
<dbReference type="BioCyc" id="YEAST:G3O-29445-MONOMER"/>
<dbReference type="BRENDA" id="1.3.1.93">
    <property type="organism ID" value="984"/>
</dbReference>
<dbReference type="Reactome" id="R-SCE-75876">
    <property type="pathway name" value="Synthesis of very long-chain fatty acyl-CoAs"/>
</dbReference>
<dbReference type="UniPathway" id="UPA00094"/>
<dbReference type="BioGRID-ORCS" id="851547">
    <property type="hits" value="1 hit in 10 CRISPR screens"/>
</dbReference>
<dbReference type="PRO" id="PR:Q99190"/>
<dbReference type="Proteomes" id="UP000002311">
    <property type="component" value="Chromosome IV"/>
</dbReference>
<dbReference type="RNAct" id="Q99190">
    <property type="molecule type" value="protein"/>
</dbReference>
<dbReference type="GO" id="GO:0005783">
    <property type="term" value="C:endoplasmic reticulum"/>
    <property type="evidence" value="ECO:0007005"/>
    <property type="project" value="SGD"/>
</dbReference>
<dbReference type="GO" id="GO:0005789">
    <property type="term" value="C:endoplasmic reticulum membrane"/>
    <property type="evidence" value="ECO:0000314"/>
    <property type="project" value="SGD"/>
</dbReference>
<dbReference type="GO" id="GO:0005739">
    <property type="term" value="C:mitochondrion"/>
    <property type="evidence" value="ECO:0007005"/>
    <property type="project" value="SGD"/>
</dbReference>
<dbReference type="GO" id="GO:0016491">
    <property type="term" value="F:oxidoreductase activity"/>
    <property type="evidence" value="ECO:0000315"/>
    <property type="project" value="SGD"/>
</dbReference>
<dbReference type="GO" id="GO:0102758">
    <property type="term" value="F:very-long-chain enoyl-CoA reductase activity"/>
    <property type="evidence" value="ECO:0007669"/>
    <property type="project" value="UniProtKB-EC"/>
</dbReference>
<dbReference type="GO" id="GO:0042761">
    <property type="term" value="P:very long-chain fatty acid biosynthetic process"/>
    <property type="evidence" value="ECO:0000318"/>
    <property type="project" value="GO_Central"/>
</dbReference>
<dbReference type="GO" id="GO:0000038">
    <property type="term" value="P:very long-chain fatty acid metabolic process"/>
    <property type="evidence" value="ECO:0000315"/>
    <property type="project" value="SGD"/>
</dbReference>
<dbReference type="InterPro" id="IPR001104">
    <property type="entry name" value="3-oxo-5_a-steroid_4-DH_C"/>
</dbReference>
<dbReference type="InterPro" id="IPR039357">
    <property type="entry name" value="SRD5A/TECR"/>
</dbReference>
<dbReference type="PANTHER" id="PTHR10556">
    <property type="entry name" value="3-OXO-5-ALPHA-STEROID 4-DEHYDROGENASE"/>
    <property type="match status" value="1"/>
</dbReference>
<dbReference type="PANTHER" id="PTHR10556:SF28">
    <property type="entry name" value="VERY-LONG-CHAIN ENOYL-COA REDUCTASE"/>
    <property type="match status" value="1"/>
</dbReference>
<dbReference type="Pfam" id="PF02544">
    <property type="entry name" value="Steroid_dh"/>
    <property type="match status" value="1"/>
</dbReference>
<dbReference type="PROSITE" id="PS50244">
    <property type="entry name" value="S5A_REDUCTASE"/>
    <property type="match status" value="1"/>
</dbReference>
<accession>Q99190</accession>
<accession>D6VRX4</accession>
<name>TECR_YEAST</name>